<gene>
    <name evidence="1 3" type="primary">clsC</name>
    <name type="synonym">ymdC</name>
    <name type="ordered locus">b1046</name>
    <name type="ordered locus">JW5150</name>
</gene>
<protein>
    <recommendedName>
        <fullName evidence="1">Cardiolipin synthase C</fullName>
        <shortName evidence="1">CL synthase</shortName>
        <ecNumber evidence="1">2.7.8.-</ecNumber>
    </recommendedName>
</protein>
<keyword id="KW-0444">Lipid biosynthesis</keyword>
<keyword id="KW-0443">Lipid metabolism</keyword>
<keyword id="KW-0594">Phospholipid biosynthesis</keyword>
<keyword id="KW-1208">Phospholipid metabolism</keyword>
<keyword id="KW-1185">Reference proteome</keyword>
<keyword id="KW-0677">Repeat</keyword>
<keyword id="KW-0808">Transferase</keyword>
<comment type="function">
    <text evidence="2">Catalyzes the synthesis of cardiolipin (CL) (diphosphatidylglycerol) from phosphatidylglycerol (PG) and phosphatidylethanolamine (PE).</text>
</comment>
<comment type="catalytic activity">
    <reaction evidence="1 2">
        <text>a 1,2-diacyl-sn-glycero-3-phospho-(1'-sn-glycerol) + a 1,2-diacyl-sn-glycero-3-phosphoethanolamine = a cardiolipin + ethanolamine</text>
        <dbReference type="Rhea" id="RHEA:42972"/>
        <dbReference type="ChEBI" id="CHEBI:57603"/>
        <dbReference type="ChEBI" id="CHEBI:62237"/>
        <dbReference type="ChEBI" id="CHEBI:64612"/>
        <dbReference type="ChEBI" id="CHEBI:64716"/>
    </reaction>
</comment>
<comment type="activity regulation">
    <text evidence="2">Full activity requires coexpression with the neighboring gene ymdB.</text>
</comment>
<comment type="disruption phenotype">
    <text evidence="2">Triple deletion of clsA, clsB and clsC results in a complete lack of cardiolipin, regardless of growth phase or growth conditions.</text>
</comment>
<comment type="miscellaneous">
    <text evidence="4">All three cardiolipin synthases (ClsA, ClsB and ClsC) contribute to CL synthesis in stationary phase. Only ClsA contributes to synthesis during logarithmic growth phase.</text>
</comment>
<comment type="similarity">
    <text evidence="1">Belongs to the phospholipase D family. Cardiolipin synthase subfamily. ClsC sub-subfamily.</text>
</comment>
<reference key="1">
    <citation type="journal article" date="1996" name="DNA Res.">
        <title>A 718-kb DNA sequence of the Escherichia coli K-12 genome corresponding to the 12.7-28.0 min region on the linkage map.</title>
        <authorList>
            <person name="Oshima T."/>
            <person name="Aiba H."/>
            <person name="Baba T."/>
            <person name="Fujita K."/>
            <person name="Hayashi K."/>
            <person name="Honjo A."/>
            <person name="Ikemoto K."/>
            <person name="Inada T."/>
            <person name="Itoh T."/>
            <person name="Kajihara M."/>
            <person name="Kanai K."/>
            <person name="Kashimoto K."/>
            <person name="Kimura S."/>
            <person name="Kitagawa M."/>
            <person name="Makino K."/>
            <person name="Masuda S."/>
            <person name="Miki T."/>
            <person name="Mizobuchi K."/>
            <person name="Mori H."/>
            <person name="Motomura K."/>
            <person name="Nakamura Y."/>
            <person name="Nashimoto H."/>
            <person name="Nishio Y."/>
            <person name="Saito N."/>
            <person name="Sampei G."/>
            <person name="Seki Y."/>
            <person name="Tagami H."/>
            <person name="Takemoto K."/>
            <person name="Wada C."/>
            <person name="Yamamoto Y."/>
            <person name="Yano M."/>
            <person name="Horiuchi T."/>
        </authorList>
    </citation>
    <scope>NUCLEOTIDE SEQUENCE [LARGE SCALE GENOMIC DNA]</scope>
    <source>
        <strain>K12 / W3110 / ATCC 27325 / DSM 5911</strain>
    </source>
</reference>
<reference key="2">
    <citation type="journal article" date="1997" name="Science">
        <title>The complete genome sequence of Escherichia coli K-12.</title>
        <authorList>
            <person name="Blattner F.R."/>
            <person name="Plunkett G. III"/>
            <person name="Bloch C.A."/>
            <person name="Perna N.T."/>
            <person name="Burland V."/>
            <person name="Riley M."/>
            <person name="Collado-Vides J."/>
            <person name="Glasner J.D."/>
            <person name="Rode C.K."/>
            <person name="Mayhew G.F."/>
            <person name="Gregor J."/>
            <person name="Davis N.W."/>
            <person name="Kirkpatrick H.A."/>
            <person name="Goeden M.A."/>
            <person name="Rose D.J."/>
            <person name="Mau B."/>
            <person name="Shao Y."/>
        </authorList>
    </citation>
    <scope>NUCLEOTIDE SEQUENCE [LARGE SCALE GENOMIC DNA]</scope>
    <source>
        <strain>K12 / MG1655 / ATCC 47076</strain>
    </source>
</reference>
<reference key="3">
    <citation type="journal article" date="2006" name="Mol. Syst. Biol.">
        <title>Highly accurate genome sequences of Escherichia coli K-12 strains MG1655 and W3110.</title>
        <authorList>
            <person name="Hayashi K."/>
            <person name="Morooka N."/>
            <person name="Yamamoto Y."/>
            <person name="Fujita K."/>
            <person name="Isono K."/>
            <person name="Choi S."/>
            <person name="Ohtsubo E."/>
            <person name="Baba T."/>
            <person name="Wanner B.L."/>
            <person name="Mori H."/>
            <person name="Horiuchi T."/>
        </authorList>
    </citation>
    <scope>NUCLEOTIDE SEQUENCE [LARGE SCALE GENOMIC DNA]</scope>
    <source>
        <strain>K12 / W3110 / ATCC 27325 / DSM 5911</strain>
    </source>
</reference>
<reference key="4">
    <citation type="journal article" date="2012" name="Proc. Natl. Acad. Sci. U.S.A.">
        <title>Discovery of a cardiolipin synthase utilizing phosphatidylethanolamine and phosphatidylglycerol as substrates.</title>
        <authorList>
            <person name="Tan B.K."/>
            <person name="Bogdanov M."/>
            <person name="Zhao J."/>
            <person name="Dowhan W."/>
            <person name="Raetz C.R."/>
            <person name="Guan Z."/>
        </authorList>
    </citation>
    <scope>FUNCTION</scope>
    <scope>CATALYTIC ACTIVITY</scope>
    <scope>ACTIVITY REGULATION</scope>
    <scope>DISRUPTION PHENOTYPE</scope>
    <scope>MUTAGENESIS OF HIS-130 AND HIS-369</scope>
    <scope>GENE NAME</scope>
</reference>
<proteinExistence type="evidence at protein level"/>
<evidence type="ECO:0000255" key="1">
    <source>
        <dbReference type="HAMAP-Rule" id="MF_01918"/>
    </source>
</evidence>
<evidence type="ECO:0000269" key="2">
    <source>
    </source>
</evidence>
<evidence type="ECO:0000303" key="3">
    <source>
    </source>
</evidence>
<evidence type="ECO:0000305" key="4">
    <source>
    </source>
</evidence>
<dbReference type="EC" id="2.7.8.-" evidence="1"/>
<dbReference type="EMBL" id="U00096">
    <property type="protein sequence ID" value="AAC74130.2"/>
    <property type="molecule type" value="Genomic_DNA"/>
</dbReference>
<dbReference type="EMBL" id="AP009048">
    <property type="protein sequence ID" value="BAA35836.2"/>
    <property type="molecule type" value="Genomic_DNA"/>
</dbReference>
<dbReference type="PIR" id="C64847">
    <property type="entry name" value="C64847"/>
</dbReference>
<dbReference type="RefSeq" id="NP_415564.2">
    <property type="nucleotide sequence ID" value="NC_000913.3"/>
</dbReference>
<dbReference type="BioGRID" id="4260689">
    <property type="interactions" value="16"/>
</dbReference>
<dbReference type="BioGRID" id="851648">
    <property type="interactions" value="1"/>
</dbReference>
<dbReference type="DIP" id="DIP-12712N"/>
<dbReference type="FunCoup" id="P75919">
    <property type="interactions" value="41"/>
</dbReference>
<dbReference type="IntAct" id="P75919">
    <property type="interactions" value="1"/>
</dbReference>
<dbReference type="STRING" id="511145.b1046"/>
<dbReference type="jPOST" id="P75919"/>
<dbReference type="PaxDb" id="511145-b1046"/>
<dbReference type="EnsemblBacteria" id="AAC74130">
    <property type="protein sequence ID" value="AAC74130"/>
    <property type="gene ID" value="b1046"/>
</dbReference>
<dbReference type="GeneID" id="947321"/>
<dbReference type="KEGG" id="ecj:JW5150"/>
<dbReference type="KEGG" id="eco:b1046"/>
<dbReference type="KEGG" id="ecoc:C3026_06365"/>
<dbReference type="PATRIC" id="fig|511145.12.peg.1087"/>
<dbReference type="EchoBASE" id="EB3634"/>
<dbReference type="eggNOG" id="COG1502">
    <property type="taxonomic scope" value="Bacteria"/>
</dbReference>
<dbReference type="HOGENOM" id="CLU_026287_0_0_6"/>
<dbReference type="InParanoid" id="P75919"/>
<dbReference type="OMA" id="WHLVVYR"/>
<dbReference type="PhylomeDB" id="P75919"/>
<dbReference type="BioCyc" id="EcoCyc:G6551-MONOMER"/>
<dbReference type="BioCyc" id="MetaCyc:G6551-MONOMER"/>
<dbReference type="BRENDA" id="2.7.8.B11">
    <property type="organism ID" value="2026"/>
</dbReference>
<dbReference type="PRO" id="PR:P75919"/>
<dbReference type="Proteomes" id="UP000000625">
    <property type="component" value="Chromosome"/>
</dbReference>
<dbReference type="GO" id="GO:0090483">
    <property type="term" value="F:phosphatidylglycerol-phosphatidylethanolamine phosphatidyltransferase activity"/>
    <property type="evidence" value="ECO:0000314"/>
    <property type="project" value="EcoCyc"/>
</dbReference>
<dbReference type="GO" id="GO:0032049">
    <property type="term" value="P:cardiolipin biosynthetic process"/>
    <property type="evidence" value="ECO:0000315"/>
    <property type="project" value="EcoCyc"/>
</dbReference>
<dbReference type="CDD" id="cd09111">
    <property type="entry name" value="PLDc_ymdC_like_1"/>
    <property type="match status" value="1"/>
</dbReference>
<dbReference type="CDD" id="cd09113">
    <property type="entry name" value="PLDc_ymdC_like_2"/>
    <property type="match status" value="1"/>
</dbReference>
<dbReference type="FunFam" id="3.30.870.10:FF:000024">
    <property type="entry name" value="Cardiolipin synthase C"/>
    <property type="match status" value="1"/>
</dbReference>
<dbReference type="FunFam" id="3.30.870.10:FF:000029">
    <property type="entry name" value="Cardiolipin synthase C"/>
    <property type="match status" value="1"/>
</dbReference>
<dbReference type="Gene3D" id="3.30.870.10">
    <property type="entry name" value="Endonuclease Chain A"/>
    <property type="match status" value="2"/>
</dbReference>
<dbReference type="HAMAP" id="MF_01918">
    <property type="entry name" value="Cardiolipin_synth_ClsC"/>
    <property type="match status" value="1"/>
</dbReference>
<dbReference type="InterPro" id="IPR030871">
    <property type="entry name" value="Cardiolipin_synth_ClsC"/>
</dbReference>
<dbReference type="InterPro" id="IPR025202">
    <property type="entry name" value="PLD-like_dom"/>
</dbReference>
<dbReference type="InterPro" id="IPR001736">
    <property type="entry name" value="PLipase_D/transphosphatidylase"/>
</dbReference>
<dbReference type="PANTHER" id="PTHR21248">
    <property type="entry name" value="CARDIOLIPIN SYNTHASE"/>
    <property type="match status" value="1"/>
</dbReference>
<dbReference type="PANTHER" id="PTHR21248:SF12">
    <property type="entry name" value="CARDIOLIPIN SYNTHASE C"/>
    <property type="match status" value="1"/>
</dbReference>
<dbReference type="Pfam" id="PF13091">
    <property type="entry name" value="PLDc_2"/>
    <property type="match status" value="2"/>
</dbReference>
<dbReference type="SMART" id="SM00155">
    <property type="entry name" value="PLDc"/>
    <property type="match status" value="2"/>
</dbReference>
<dbReference type="SUPFAM" id="SSF56024">
    <property type="entry name" value="Phospholipase D/nuclease"/>
    <property type="match status" value="2"/>
</dbReference>
<dbReference type="PROSITE" id="PS50035">
    <property type="entry name" value="PLD"/>
    <property type="match status" value="2"/>
</dbReference>
<sequence length="473" mass="53666">MPRLASAVLPLCSQHPGQCGLFPLEKSLDAFAARYRLAEMAEHTLDVQYYIWQDDMSGRLLFSALLAAAKRGVRVRLLLDDNNTPGLDDILRLLDSHPRIEVRLFNPFSFRLLRPLGYITDFSRLNRRMHNKSFTVDGVVTLVGGRNIGDAYFGAGEEPLFSDLDVMAIGPVVEDVADDFARYWYCKSVSPLQQVLDVPEGEMADRIELPASWHNDAMTHRYLRKMESSPFINHLVDGTLPLIWAKTRLLSDDPAKGEGKAKRHSLLPQRLFDIMGSPSERIDIISSYFVPTRAGVAQLLRMVRKGVKIAILTNSLAANDVAVVHAGYARWRKKLLRYGVELYELKPTREQSSTLHDRGITGNSGASLHAKTFSIDGKTVFIGSFNFDPRSTLLNTEMGFVIESETLAQLIDKRFIQSQYDAAWQLRLDRWGRINWVDRHAKKEIILKKEPATSFWKRVMVRLASILPVEWLL</sequence>
<name>CLSC_ECOLI</name>
<feature type="chain" id="PRO_0000201289" description="Cardiolipin synthase C">
    <location>
        <begin position="1"/>
        <end position="473"/>
    </location>
</feature>
<feature type="domain" description="PLD phosphodiesterase 1" evidence="1">
    <location>
        <begin position="125"/>
        <end position="152"/>
    </location>
</feature>
<feature type="domain" description="PLD phosphodiesterase 2" evidence="1">
    <location>
        <begin position="364"/>
        <end position="391"/>
    </location>
</feature>
<feature type="active site" evidence="1">
    <location>
        <position position="130"/>
    </location>
</feature>
<feature type="active site" evidence="1">
    <location>
        <position position="132"/>
    </location>
</feature>
<feature type="active site" evidence="1">
    <location>
        <position position="137"/>
    </location>
</feature>
<feature type="active site" evidence="1">
    <location>
        <position position="369"/>
    </location>
</feature>
<feature type="active site" evidence="1">
    <location>
        <position position="371"/>
    </location>
</feature>
<feature type="active site" evidence="1">
    <location>
        <position position="376"/>
    </location>
</feature>
<feature type="mutagenesis site" description="Lack of activity." evidence="2">
    <original>H</original>
    <variation>A</variation>
    <location>
        <position position="130"/>
    </location>
</feature>
<feature type="mutagenesis site" description="Lack of activity." evidence="2">
    <original>H</original>
    <variation>A</variation>
    <location>
        <position position="369"/>
    </location>
</feature>
<accession>P75919</accession>
<organism>
    <name type="scientific">Escherichia coli (strain K12)</name>
    <dbReference type="NCBI Taxonomy" id="83333"/>
    <lineage>
        <taxon>Bacteria</taxon>
        <taxon>Pseudomonadati</taxon>
        <taxon>Pseudomonadota</taxon>
        <taxon>Gammaproteobacteria</taxon>
        <taxon>Enterobacterales</taxon>
        <taxon>Enterobacteriaceae</taxon>
        <taxon>Escherichia</taxon>
    </lineage>
</organism>